<name>TCAA_STAAN</name>
<feature type="chain" id="PRO_0000333168" description="Membrane-associated protein TcaA">
    <location>
        <begin position="1"/>
        <end position="460"/>
    </location>
</feature>
<feature type="topological domain" description="Cytoplasmic" evidence="2">
    <location>
        <begin position="1"/>
        <end position="49"/>
    </location>
</feature>
<feature type="transmembrane region" description="Helical" evidence="2">
    <location>
        <begin position="50"/>
        <end position="70"/>
    </location>
</feature>
<feature type="topological domain" description="Extracellular" evidence="2">
    <location>
        <begin position="71"/>
        <end position="460"/>
    </location>
</feature>
<feature type="zinc finger region" description="C4-type" evidence="2">
    <location>
        <begin position="4"/>
        <end position="21"/>
    </location>
</feature>
<keyword id="KW-0046">Antibiotic resistance</keyword>
<keyword id="KW-1003">Cell membrane</keyword>
<keyword id="KW-0472">Membrane</keyword>
<keyword id="KW-0479">Metal-binding</keyword>
<keyword id="KW-0812">Transmembrane</keyword>
<keyword id="KW-1133">Transmembrane helix</keyword>
<keyword id="KW-0862">Zinc</keyword>
<keyword id="KW-0863">Zinc-finger</keyword>
<dbReference type="EMBL" id="BA000018">
    <property type="protein sequence ID" value="BAB43448.1"/>
    <property type="molecule type" value="Genomic_DNA"/>
</dbReference>
<dbReference type="PIR" id="G90035">
    <property type="entry name" value="G90035"/>
</dbReference>
<dbReference type="RefSeq" id="WP_000833794.1">
    <property type="nucleotide sequence ID" value="NC_002745.2"/>
</dbReference>
<dbReference type="EnsemblBacteria" id="BAB43448">
    <property type="protein sequence ID" value="BAB43448"/>
    <property type="gene ID" value="BAB43448"/>
</dbReference>
<dbReference type="KEGG" id="sau:SA2146"/>
<dbReference type="HOGENOM" id="CLU_047245_0_0_9"/>
<dbReference type="GO" id="GO:0045121">
    <property type="term" value="C:membrane raft"/>
    <property type="evidence" value="ECO:0007669"/>
    <property type="project" value="UniProtKB-SubCell"/>
</dbReference>
<dbReference type="GO" id="GO:0005886">
    <property type="term" value="C:plasma membrane"/>
    <property type="evidence" value="ECO:0007669"/>
    <property type="project" value="UniProtKB-SubCell"/>
</dbReference>
<dbReference type="GO" id="GO:0008270">
    <property type="term" value="F:zinc ion binding"/>
    <property type="evidence" value="ECO:0007669"/>
    <property type="project" value="UniProtKB-KW"/>
</dbReference>
<dbReference type="GO" id="GO:0046677">
    <property type="term" value="P:response to antibiotic"/>
    <property type="evidence" value="ECO:0007669"/>
    <property type="project" value="UniProtKB-KW"/>
</dbReference>
<dbReference type="InterPro" id="IPR023599">
    <property type="entry name" value="Mem_prot_TcaA"/>
</dbReference>
<dbReference type="InterPro" id="IPR054529">
    <property type="entry name" value="TcaA_2nd"/>
</dbReference>
<dbReference type="InterPro" id="IPR054530">
    <property type="entry name" value="TcaA_4th"/>
</dbReference>
<dbReference type="PANTHER" id="PTHR40038">
    <property type="entry name" value="MEMBRANE-ASSOCIATED PROTEIN TCAA"/>
    <property type="match status" value="1"/>
</dbReference>
<dbReference type="PANTHER" id="PTHR40038:SF1">
    <property type="entry name" value="MEMBRANE-ASSOCIATED PROTEIN TCAA"/>
    <property type="match status" value="1"/>
</dbReference>
<dbReference type="Pfam" id="PF22813">
    <property type="entry name" value="TcaA_2nd"/>
    <property type="match status" value="1"/>
</dbReference>
<dbReference type="Pfam" id="PF22820">
    <property type="entry name" value="TcaA_3rd_4th"/>
    <property type="match status" value="1"/>
</dbReference>
<dbReference type="Pfam" id="PF22819">
    <property type="entry name" value="TcaA_5th"/>
    <property type="match status" value="1"/>
</dbReference>
<dbReference type="PIRSF" id="PIRSF032522">
    <property type="entry name" value="TcaA"/>
    <property type="match status" value="1"/>
</dbReference>
<reference key="1">
    <citation type="journal article" date="2001" name="Lancet">
        <title>Whole genome sequencing of meticillin-resistant Staphylococcus aureus.</title>
        <authorList>
            <person name="Kuroda M."/>
            <person name="Ohta T."/>
            <person name="Uchiyama I."/>
            <person name="Baba T."/>
            <person name="Yuzawa H."/>
            <person name="Kobayashi I."/>
            <person name="Cui L."/>
            <person name="Oguchi A."/>
            <person name="Aoki K."/>
            <person name="Nagai Y."/>
            <person name="Lian J.-Q."/>
            <person name="Ito T."/>
            <person name="Kanamori M."/>
            <person name="Matsumaru H."/>
            <person name="Maruyama A."/>
            <person name="Murakami H."/>
            <person name="Hosoyama A."/>
            <person name="Mizutani-Ui Y."/>
            <person name="Takahashi N.K."/>
            <person name="Sawano T."/>
            <person name="Inoue R."/>
            <person name="Kaito C."/>
            <person name="Sekimizu K."/>
            <person name="Hirakawa H."/>
            <person name="Kuhara S."/>
            <person name="Goto S."/>
            <person name="Yabuzaki J."/>
            <person name="Kanehisa M."/>
            <person name="Yamashita A."/>
            <person name="Oshima K."/>
            <person name="Furuya K."/>
            <person name="Yoshino C."/>
            <person name="Shiba T."/>
            <person name="Hattori M."/>
            <person name="Ogasawara N."/>
            <person name="Hayashi H."/>
            <person name="Hiramatsu K."/>
        </authorList>
    </citation>
    <scope>NUCLEOTIDE SEQUENCE [LARGE SCALE GENOMIC DNA]</scope>
    <source>
        <strain>N315</strain>
    </source>
</reference>
<reference key="2">
    <citation type="journal article" date="2006" name="Biochim. Biophys. Acta">
        <title>Strain dependence of the cell wall-damage induced stimulon in Staphylococcus aureus.</title>
        <authorList>
            <person name="McCallum N."/>
            <person name="Spehar G."/>
            <person name="Bischoff M."/>
            <person name="Berger-Bachi B."/>
        </authorList>
    </citation>
    <scope>INDUCTION</scope>
</reference>
<reference key="3">
    <citation type="journal article" date="2007" name="Antimicrob. Agents Chemother.">
        <title>Functional characterization of tcaA: minimal requirement for teicoplanin susceptibility and role in Caenorhabditis elegans virulence.</title>
        <authorList>
            <person name="McCallum N."/>
            <person name="Brassinga A.K.C."/>
            <person name="Sifri C.D."/>
            <person name="Berger-Baechi B."/>
        </authorList>
    </citation>
    <scope>REGULATION BY VRASR</scope>
</reference>
<reference key="4">
    <citation type="journal article" date="2010" name="Genes Dev.">
        <title>Functional microdomains in bacterial membranes.</title>
        <authorList>
            <person name="Lopez D."/>
            <person name="Kolter R."/>
        </authorList>
    </citation>
    <scope>IDENTIFICATION BY MASS SPECTROMETRY</scope>
    <scope>SUBCELLULAR LOCATION</scope>
</reference>
<accession>Q7A3X6</accession>
<gene>
    <name type="primary">tcaA</name>
    <name type="ordered locus">SA2146</name>
</gene>
<comment type="function">
    <text evidence="1">Plays a major role in decreasing resistance to glycopeptide antibiotics.</text>
</comment>
<comment type="subcellular location">
    <subcellularLocation>
        <location evidence="4">Cell membrane</location>
        <topology evidence="1">Single-pass membrane protein</topology>
    </subcellularLocation>
    <subcellularLocation>
        <location evidence="4">Membrane raft</location>
        <topology evidence="2">Single-pass membrane protein</topology>
    </subcellularLocation>
    <text evidence="4">Present in detergent-resistant membrane (DRM) fractions that may be equivalent to eukaryotic membrane rafts; these rafts include proteins involved in signaling, molecule trafficking and protein secretion.</text>
</comment>
<comment type="induction">
    <text evidence="3">Transcriptionally regulated by the vraSR two-component system in response to cell wall antibiotics, such as teicoplanin, vancomycin, and oxacillin.</text>
</comment>
<comment type="similarity">
    <text evidence="5">Belongs to the TcaA family.</text>
</comment>
<organism>
    <name type="scientific">Staphylococcus aureus (strain N315)</name>
    <dbReference type="NCBI Taxonomy" id="158879"/>
    <lineage>
        <taxon>Bacteria</taxon>
        <taxon>Bacillati</taxon>
        <taxon>Bacillota</taxon>
        <taxon>Bacilli</taxon>
        <taxon>Bacillales</taxon>
        <taxon>Staphylococcaceae</taxon>
        <taxon>Staphylococcus</taxon>
    </lineage>
</organism>
<protein>
    <recommendedName>
        <fullName>Membrane-associated protein TcaA</fullName>
    </recommendedName>
</protein>
<evidence type="ECO:0000250" key="1"/>
<evidence type="ECO:0000255" key="2"/>
<evidence type="ECO:0000269" key="3">
    <source>
    </source>
</evidence>
<evidence type="ECO:0000269" key="4">
    <source>
    </source>
</evidence>
<evidence type="ECO:0000305" key="5"/>
<sequence>MKSCPKCGQQAQDDVQICTQCGHKFDSRQALYRKSTDEDIQTNNIKMRKMVPWAIGFFILILIIILFFLLRNFNSPEAQTKILVNAIENNDKQKVATLLSTKDNKVDSEEAKVYINYIKDEVGLKQFVSDLKNTVHKLNKSKTSVASYIQTRSGQNILRVSKNGTRYIFFDNMSFTAPTKQPIVKPKEKTKYEFKSGGKKKMVIAEANKVTPIGNFILGTYRIPAMKSTENGDFAGYLKFDFRQSNSETVDVTEDFEEANITVTLKGDTKLNDSSKKVTINDREMAFSSSKTYGPYPQNKDITISASGKAKGKTFTTQTKTIKASDLKYNTEITLNFDSEDIEDYVEKKEKEENSLKNKLIEFFAGYSLANNAAFNQSDFDFVSSYIKKGSSFYDDVKKRVSKGSLMMISSPQIIDAEKHGDKITATVRLINENGKQVDKEYELEQGSQDRLQLIKTSEK</sequence>
<proteinExistence type="evidence at protein level"/>